<organism>
    <name type="scientific">Penicillium citrinum</name>
    <dbReference type="NCBI Taxonomy" id="5077"/>
    <lineage>
        <taxon>Eukaryota</taxon>
        <taxon>Fungi</taxon>
        <taxon>Dikarya</taxon>
        <taxon>Ascomycota</taxon>
        <taxon>Pezizomycotina</taxon>
        <taxon>Eurotiomycetes</taxon>
        <taxon>Eurotiomycetidae</taxon>
        <taxon>Eurotiales</taxon>
        <taxon>Aspergillaceae</taxon>
        <taxon>Penicillium</taxon>
    </lineage>
</organism>
<keyword id="KW-0012">Acyltransferase</keyword>
<keyword id="KW-0489">Methyltransferase</keyword>
<keyword id="KW-0511">Multifunctional enzyme</keyword>
<keyword id="KW-0521">NADP</keyword>
<keyword id="KW-0560">Oxidoreductase</keyword>
<keyword id="KW-0596">Phosphopantetheine</keyword>
<keyword id="KW-0597">Phosphoprotein</keyword>
<keyword id="KW-0949">S-adenosyl-L-methionine</keyword>
<keyword id="KW-0808">Transferase</keyword>
<accession>Q8J0F7</accession>
<feature type="chain" id="PRO_0000436280" description="Compactin nonaketide synthase, polyketide synthase component">
    <location>
        <begin position="1"/>
        <end position="3032"/>
    </location>
</feature>
<feature type="domain" description="Ketosynthase family 3 (KS3)" evidence="3">
    <location>
        <begin position="8"/>
        <end position="447"/>
    </location>
</feature>
<feature type="domain" description="PKS/mFAS DH" evidence="4">
    <location>
        <begin position="953"/>
        <end position="1261"/>
    </location>
</feature>
<feature type="domain" description="Carrier" evidence="2">
    <location>
        <begin position="2441"/>
        <end position="2520"/>
    </location>
</feature>
<feature type="region of interest" description="Acyl and malonyl transferase" evidence="1">
    <location>
        <begin position="560"/>
        <end position="901"/>
    </location>
</feature>
<feature type="region of interest" description="N-terminal hotdog fold" evidence="4">
    <location>
        <begin position="953"/>
        <end position="1089"/>
    </location>
</feature>
<feature type="region of interest" description="Dehydratase-like" evidence="1">
    <location>
        <begin position="985"/>
        <end position="997"/>
    </location>
</feature>
<feature type="region of interest" description="C-terminal hotdog fold" evidence="4">
    <location>
        <begin position="1106"/>
        <end position="1261"/>
    </location>
</feature>
<feature type="region of interest" description="Methyltransferase" evidence="1">
    <location>
        <begin position="1506"/>
        <end position="1544"/>
    </location>
</feature>
<feature type="region of interest" description="Disordered" evidence="6">
    <location>
        <begin position="2531"/>
        <end position="2580"/>
    </location>
</feature>
<feature type="region of interest" description="Peptide synthetase elongation" evidence="1">
    <location>
        <begin position="2586"/>
        <end position="2946"/>
    </location>
</feature>
<feature type="compositionally biased region" description="Low complexity" evidence="6">
    <location>
        <begin position="2532"/>
        <end position="2547"/>
    </location>
</feature>
<feature type="compositionally biased region" description="Acidic residues" evidence="6">
    <location>
        <begin position="2563"/>
        <end position="2575"/>
    </location>
</feature>
<feature type="active site" description="For beta-ketoacyl synthase activity" evidence="3">
    <location>
        <position position="181"/>
    </location>
</feature>
<feature type="active site" description="For beta-ketoacyl synthase activity" evidence="3">
    <location>
        <position position="320"/>
    </location>
</feature>
<feature type="active site" description="For beta-ketoacyl synthase activity" evidence="3">
    <location>
        <position position="367"/>
    </location>
</feature>
<feature type="active site" description="For malonyltransferase activity" evidence="5">
    <location>
        <position position="654"/>
    </location>
</feature>
<feature type="active site" description="Proton acceptor; for dehydratase activity" evidence="4">
    <location>
        <position position="985"/>
    </location>
</feature>
<feature type="active site" description="Proton donor; for dehydratase activity" evidence="4">
    <location>
        <position position="1168"/>
    </location>
</feature>
<feature type="modified residue" description="O-(pantetheine 4'-phosphoryl)serine" evidence="2">
    <location>
        <position position="2480"/>
    </location>
</feature>
<name>MLCA_PENCI</name>
<gene>
    <name evidence="12" type="primary">mlcA</name>
    <name evidence="12" type="synonym">pks4</name>
</gene>
<reference key="1">
    <citation type="journal article" date="2002" name="Mol. Genet. Genomics">
        <title>Molecular cloning and characterization of an ML-236B (compactin) biosynthetic gene cluster in Penicillium citrinum.</title>
        <authorList>
            <person name="Abe Y."/>
            <person name="Suzuki T."/>
            <person name="Ono C."/>
            <person name="Iwamoto K."/>
            <person name="Hosobuchi M."/>
            <person name="Yoshikawa H."/>
        </authorList>
    </citation>
    <scope>NUCLEOTIDE SEQUENCE [GENOMIC DNA]</scope>
    <scope>INDUCTION</scope>
    <scope>FUNCTION</scope>
    <scope>DISRUPTION PHENOTYPE</scope>
</reference>
<reference key="2">
    <citation type="journal article" date="2002" name="Mol. Genet. Genomics">
        <title>Effect of increased dosage of the ML-236B (compactin) biosynthetic gene cluster on ML-236B production in Penicillium citrinum.</title>
        <authorList>
            <person name="Abe Y."/>
            <person name="Suzuki T."/>
            <person name="Mizuno T."/>
            <person name="Ono C."/>
            <person name="Iwamoto K."/>
            <person name="Hosobuchi M."/>
            <person name="Yoshikawa H."/>
        </authorList>
    </citation>
    <scope>FUNCTION</scope>
</reference>
<reference key="3">
    <citation type="journal article" date="1976" name="J. Antibiot.">
        <title>ML-236A, ML-236B, and ML-236C, new inhibitors of cholesterogenesis produced by Penicillium citrinium.</title>
        <authorList>
            <person name="Endo A."/>
            <person name="Kuroda M."/>
            <person name="Tsujita Y."/>
        </authorList>
    </citation>
    <scope>BIOTECHNOLOGY</scope>
</reference>
<reference key="4">
    <citation type="journal article" date="2002" name="Mol. Genet. Genomics">
        <title>Functional analysis of mlcR, a regulatory gene for ML-236B (compactin) biosynthesis in Penicillium citrinum.</title>
        <authorList>
            <person name="Abe Y."/>
            <person name="Ono C."/>
            <person name="Hosobuchi M."/>
            <person name="Yoshikawa H."/>
        </authorList>
    </citation>
    <scope>INDUCTION</scope>
</reference>
<reference key="5">
    <citation type="journal article" date="2008" name="Fungal Genet. Biol.">
        <title>Identification of the specific sequence recognized by Penicillium citrinum MlcR, a GAL4-type transcriptional activator of ML-236B (compactin) biosynthetic genes.</title>
        <authorList>
            <person name="Baba S."/>
            <person name="Nihira T."/>
            <person name="Hosobuchi M."/>
        </authorList>
    </citation>
    <scope>INDUCTION</scope>
</reference>
<dbReference type="EC" id="2.3.1.-" evidence="13"/>
<dbReference type="EMBL" id="AB072893">
    <property type="protein sequence ID" value="BAC20564.1"/>
    <property type="molecule type" value="Genomic_DNA"/>
</dbReference>
<dbReference type="SMR" id="Q8J0F7"/>
<dbReference type="GO" id="GO:0004315">
    <property type="term" value="F:3-oxoacyl-[acyl-carrier-protein] synthase activity"/>
    <property type="evidence" value="ECO:0007669"/>
    <property type="project" value="InterPro"/>
</dbReference>
<dbReference type="GO" id="GO:0004312">
    <property type="term" value="F:fatty acid synthase activity"/>
    <property type="evidence" value="ECO:0007669"/>
    <property type="project" value="TreeGrafter"/>
</dbReference>
<dbReference type="GO" id="GO:0008168">
    <property type="term" value="F:methyltransferase activity"/>
    <property type="evidence" value="ECO:0007669"/>
    <property type="project" value="UniProtKB-KW"/>
</dbReference>
<dbReference type="GO" id="GO:0016491">
    <property type="term" value="F:oxidoreductase activity"/>
    <property type="evidence" value="ECO:0007669"/>
    <property type="project" value="UniProtKB-KW"/>
</dbReference>
<dbReference type="GO" id="GO:0031177">
    <property type="term" value="F:phosphopantetheine binding"/>
    <property type="evidence" value="ECO:0007669"/>
    <property type="project" value="InterPro"/>
</dbReference>
<dbReference type="GO" id="GO:0006633">
    <property type="term" value="P:fatty acid biosynthetic process"/>
    <property type="evidence" value="ECO:0007669"/>
    <property type="project" value="InterPro"/>
</dbReference>
<dbReference type="GO" id="GO:0032259">
    <property type="term" value="P:methylation"/>
    <property type="evidence" value="ECO:0007669"/>
    <property type="project" value="UniProtKB-KW"/>
</dbReference>
<dbReference type="GO" id="GO:0140877">
    <property type="term" value="P:mevastatin biosynthetic process"/>
    <property type="evidence" value="ECO:0000315"/>
    <property type="project" value="GO_Central"/>
</dbReference>
<dbReference type="CDD" id="cd02440">
    <property type="entry name" value="AdoMet_MTases"/>
    <property type="match status" value="1"/>
</dbReference>
<dbReference type="CDD" id="cd19532">
    <property type="entry name" value="C_PKS-NRPS"/>
    <property type="match status" value="1"/>
</dbReference>
<dbReference type="CDD" id="cd00833">
    <property type="entry name" value="PKS"/>
    <property type="match status" value="1"/>
</dbReference>
<dbReference type="FunFam" id="3.40.47.10:FF:000019">
    <property type="entry name" value="Polyketide synthase type I"/>
    <property type="match status" value="1"/>
</dbReference>
<dbReference type="Gene3D" id="3.40.47.10">
    <property type="match status" value="1"/>
</dbReference>
<dbReference type="Gene3D" id="3.30.559.10">
    <property type="entry name" value="Chloramphenicol acetyltransferase-like domain"/>
    <property type="match status" value="1"/>
</dbReference>
<dbReference type="Gene3D" id="3.40.366.10">
    <property type="entry name" value="Malonyl-Coenzyme A Acyl Carrier Protein, domain 2"/>
    <property type="match status" value="1"/>
</dbReference>
<dbReference type="Gene3D" id="3.40.50.720">
    <property type="entry name" value="NAD(P)-binding Rossmann-like Domain"/>
    <property type="match status" value="2"/>
</dbReference>
<dbReference type="Gene3D" id="3.30.559.30">
    <property type="entry name" value="Nonribosomal peptide synthetase, condensation domain"/>
    <property type="match status" value="1"/>
</dbReference>
<dbReference type="Gene3D" id="3.10.129.110">
    <property type="entry name" value="Polyketide synthase dehydratase"/>
    <property type="match status" value="1"/>
</dbReference>
<dbReference type="Gene3D" id="3.40.50.150">
    <property type="entry name" value="Vaccinia Virus protein VP39"/>
    <property type="match status" value="1"/>
</dbReference>
<dbReference type="InterPro" id="IPR001227">
    <property type="entry name" value="Ac_transferase_dom_sf"/>
</dbReference>
<dbReference type="InterPro" id="IPR036736">
    <property type="entry name" value="ACP-like_sf"/>
</dbReference>
<dbReference type="InterPro" id="IPR014043">
    <property type="entry name" value="Acyl_transferase_dom"/>
</dbReference>
<dbReference type="InterPro" id="IPR016035">
    <property type="entry name" value="Acyl_Trfase/lysoPLipase"/>
</dbReference>
<dbReference type="InterPro" id="IPR023213">
    <property type="entry name" value="CAT-like_dom_sf"/>
</dbReference>
<dbReference type="InterPro" id="IPR001242">
    <property type="entry name" value="Condensatn"/>
</dbReference>
<dbReference type="InterPro" id="IPR018201">
    <property type="entry name" value="Ketoacyl_synth_AS"/>
</dbReference>
<dbReference type="InterPro" id="IPR014031">
    <property type="entry name" value="Ketoacyl_synth_C"/>
</dbReference>
<dbReference type="InterPro" id="IPR014030">
    <property type="entry name" value="Ketoacyl_synth_N"/>
</dbReference>
<dbReference type="InterPro" id="IPR016036">
    <property type="entry name" value="Malonyl_transacylase_ACP-bd"/>
</dbReference>
<dbReference type="InterPro" id="IPR013217">
    <property type="entry name" value="Methyltransf_12"/>
</dbReference>
<dbReference type="InterPro" id="IPR036291">
    <property type="entry name" value="NAD(P)-bd_dom_sf"/>
</dbReference>
<dbReference type="InterPro" id="IPR032821">
    <property type="entry name" value="PKS_assoc"/>
</dbReference>
<dbReference type="InterPro" id="IPR020841">
    <property type="entry name" value="PKS_Beta-ketoAc_synthase_dom"/>
</dbReference>
<dbReference type="InterPro" id="IPR042104">
    <property type="entry name" value="PKS_dehydratase_sf"/>
</dbReference>
<dbReference type="InterPro" id="IPR020807">
    <property type="entry name" value="PKS_DH"/>
</dbReference>
<dbReference type="InterPro" id="IPR049551">
    <property type="entry name" value="PKS_DH_C"/>
</dbReference>
<dbReference type="InterPro" id="IPR049552">
    <property type="entry name" value="PKS_DH_N"/>
</dbReference>
<dbReference type="InterPro" id="IPR013968">
    <property type="entry name" value="PKS_KR"/>
</dbReference>
<dbReference type="InterPro" id="IPR049900">
    <property type="entry name" value="PKS_mFAS_DH"/>
</dbReference>
<dbReference type="InterPro" id="IPR050091">
    <property type="entry name" value="PKS_NRPS_Biosynth_Enz"/>
</dbReference>
<dbReference type="InterPro" id="IPR020806">
    <property type="entry name" value="PKS_PP-bd"/>
</dbReference>
<dbReference type="InterPro" id="IPR009081">
    <property type="entry name" value="PP-bd_ACP"/>
</dbReference>
<dbReference type="InterPro" id="IPR029063">
    <property type="entry name" value="SAM-dependent_MTases_sf"/>
</dbReference>
<dbReference type="InterPro" id="IPR016039">
    <property type="entry name" value="Thiolase-like"/>
</dbReference>
<dbReference type="PANTHER" id="PTHR43775">
    <property type="entry name" value="FATTY ACID SYNTHASE"/>
    <property type="match status" value="1"/>
</dbReference>
<dbReference type="PANTHER" id="PTHR43775:SF20">
    <property type="entry name" value="HYBRID PKS-NRPS SYNTHETASE APDA"/>
    <property type="match status" value="1"/>
</dbReference>
<dbReference type="Pfam" id="PF00698">
    <property type="entry name" value="Acyl_transf_1"/>
    <property type="match status" value="1"/>
</dbReference>
<dbReference type="Pfam" id="PF00668">
    <property type="entry name" value="Condensation"/>
    <property type="match status" value="1"/>
</dbReference>
<dbReference type="Pfam" id="PF16197">
    <property type="entry name" value="KAsynt_C_assoc"/>
    <property type="match status" value="1"/>
</dbReference>
<dbReference type="Pfam" id="PF00109">
    <property type="entry name" value="ketoacyl-synt"/>
    <property type="match status" value="1"/>
</dbReference>
<dbReference type="Pfam" id="PF02801">
    <property type="entry name" value="Ketoacyl-synt_C"/>
    <property type="match status" value="1"/>
</dbReference>
<dbReference type="Pfam" id="PF08659">
    <property type="entry name" value="KR"/>
    <property type="match status" value="1"/>
</dbReference>
<dbReference type="Pfam" id="PF08242">
    <property type="entry name" value="Methyltransf_12"/>
    <property type="match status" value="1"/>
</dbReference>
<dbReference type="Pfam" id="PF21089">
    <property type="entry name" value="PKS_DH_N"/>
    <property type="match status" value="1"/>
</dbReference>
<dbReference type="Pfam" id="PF00550">
    <property type="entry name" value="PP-binding"/>
    <property type="match status" value="1"/>
</dbReference>
<dbReference type="Pfam" id="PF14765">
    <property type="entry name" value="PS-DH"/>
    <property type="match status" value="1"/>
</dbReference>
<dbReference type="SMART" id="SM00827">
    <property type="entry name" value="PKS_AT"/>
    <property type="match status" value="1"/>
</dbReference>
<dbReference type="SMART" id="SM00826">
    <property type="entry name" value="PKS_DH"/>
    <property type="match status" value="1"/>
</dbReference>
<dbReference type="SMART" id="SM00822">
    <property type="entry name" value="PKS_KR"/>
    <property type="match status" value="1"/>
</dbReference>
<dbReference type="SMART" id="SM00825">
    <property type="entry name" value="PKS_KS"/>
    <property type="match status" value="1"/>
</dbReference>
<dbReference type="SMART" id="SM00823">
    <property type="entry name" value="PKS_PP"/>
    <property type="match status" value="1"/>
</dbReference>
<dbReference type="SUPFAM" id="SSF47336">
    <property type="entry name" value="ACP-like"/>
    <property type="match status" value="1"/>
</dbReference>
<dbReference type="SUPFAM" id="SSF52777">
    <property type="entry name" value="CoA-dependent acyltransferases"/>
    <property type="match status" value="2"/>
</dbReference>
<dbReference type="SUPFAM" id="SSF52151">
    <property type="entry name" value="FabD/lysophospholipase-like"/>
    <property type="match status" value="1"/>
</dbReference>
<dbReference type="SUPFAM" id="SSF51735">
    <property type="entry name" value="NAD(P)-binding Rossmann-fold domains"/>
    <property type="match status" value="2"/>
</dbReference>
<dbReference type="SUPFAM" id="SSF55048">
    <property type="entry name" value="Probable ACP-binding domain of malonyl-CoA ACP transacylase"/>
    <property type="match status" value="1"/>
</dbReference>
<dbReference type="SUPFAM" id="SSF53335">
    <property type="entry name" value="S-adenosyl-L-methionine-dependent methyltransferases"/>
    <property type="match status" value="1"/>
</dbReference>
<dbReference type="SUPFAM" id="SSF53901">
    <property type="entry name" value="Thiolase-like"/>
    <property type="match status" value="1"/>
</dbReference>
<dbReference type="PROSITE" id="PS50075">
    <property type="entry name" value="CARRIER"/>
    <property type="match status" value="1"/>
</dbReference>
<dbReference type="PROSITE" id="PS00606">
    <property type="entry name" value="KS3_1"/>
    <property type="match status" value="1"/>
</dbReference>
<dbReference type="PROSITE" id="PS52004">
    <property type="entry name" value="KS3_2"/>
    <property type="match status" value="1"/>
</dbReference>
<dbReference type="PROSITE" id="PS52019">
    <property type="entry name" value="PKS_MFAS_DH"/>
    <property type="match status" value="1"/>
</dbReference>
<sequence>MDQANYPNEPIVVVGSGCRFPGGVNTPSKLWELLKEPRDVQTKIPKERFDVDTFYSPDGTHPGRTNAPFAYLLQEDLRGFDASFFNIQAGEAETIDPQQRLLLETVYEAVSNAGLRIQGLQGSSTAVYVGMMTHDYETIVTRELDSIPTYSATGVAVSVASNRVSYFFDWHGPSMTIDTACSSSLAAVHLAVQQLRTGESTMAVAAGANLILGPMTFVMESKLNMLSPNGRSRMWDAAADGYARGEGVCSIVLKTLSQALRDGDSIECVIRETGINQDGRTTGITMPNHSAQEALIRATYAKAGLDITNPQERCQFFEAHGTGTPAGDPQEAEAIATAFFGHKDGTIDSDGEKDELFVGSIKTVLGHTEGTAGIAGLMKASFAVRNGVIPPNLLFEKISPRVAPFYTHLKIATEATEWPIVAPGQPRRVSVNSFGFGGTNAHAIIEEYMAPPHKPTAVVTEVTSDADACSLPLVLSSKSQRSMKATLENMLQFLETHDDVDMHDIAYTLLEKRSILPFRRAIAAHNKEVARAALEAAIADGEVVTDFRTDANDNPRVLGVFTGQGAQWPGMLKKLMVGMPFVRGILEELDNSLQTLPEKYRPTWTLYDQLMLEGDASNVRLASFSQPLCCAVQIVLVRLLAAAGIEFSAIVGHSSGEIACAFAAGFISATQAIRIAHLRGVVSAEHASSPSGQTGAMLAAGMSYDDAKELCELEAFEGRVCVAASNSPDSVTFSGDMDAIQHVEGVLEDESTFARILRVDKAYHSHHMHPCAAPYVKALLECDCAVADGQGNDSVAWFSAVHETSKQMTVQDVMPAYWKDNLVSPVLFSQAVQKAVITHRLIDVAIEIGAHPALKGPCLATIKDALAGVELPYTGCLARNVDDVDAFAGGLGYIWERFGVRSIDAEGFVQQVRPDRAVQNLSKSLPTYSWDHTRQYWAESRSTRQHLRGGAPHLLLGKLSSYSTASTFQWTNFIRPRDLEWLDGHALQGQTVFPAAGYIIMAMEAAMKVAGERAAQVQLLEILDMSINKAIVFEDENTSVELNLTAEVTSDNDADGQVTVKFVIDSCLAKESELSTSAKGQIVITLGEASPSSQLLPPPEEEYPQMNNVNIDFFYRELDLLGYDYSKDFRRLQTMRRADSKASGTLAFLPLKDELRNEPLLLHPAPLDIAFQTVIGAYSSPGDRRLRSLYVPTHVDRVTLIPSLCISAGNSGETELAFDTINTHDKGDFLSGDITVYDSTKTTLFQVDNIVFKPFSPPTASTDHRIFAKWVWGPLTPEKLLEDPATLIIARDKEDILTIERIVYFYIKSFLAQITPDDRQNADLHSQKYIEWCDQVQADARAGHHQWYQESWEEDTSVHIEQMCESNSSHPHVRLIQRVGKELISIVRGNGDPLDIMNRDGLFTEYYTNKLAFGSAIHVVQDLVSQIAHRYQSIDILEIGLGTGIATKRVLASPQLGFNSYTCTDISADVIGKAREQLSEFDGLMQFEALDINRSPAEQGFKPHSYDLIIASDVLHASSNFEEKLAHIRSLLKPGGHLVTFGVTHREPARLAFISGLFADRWTGEDETRALSASGSVDQWEHTLKRVGFSGVDSRTLDREDDLIPSVFSTHAVDATVERLYDPLSAPLKDSYPPLVVIGGESTKTERILNDMKAALPHRHIHSVKRLESVLDDPALQPKSTFVILSELDDEVFCNLEEDKFEAVKSLLFYAGRMMWLTENAWIDHPHQASTIGMLRTIKLENPDLGTHVFDVDTVENLDTKFFVEQLLRFEESDDQLLESITWTHEPEVYWCKGRAWVPRLKQDIARNDRMNSSRRPIFGNFNSSKTAIALKEARGASSSMYYLESTETCDSLEDARHAGKATVRVRYALPQAIRVGHLGYFHVVQGSILENTCEVPVVALAEKNGSILHVPRNYMHSLPDNMAEGEDSSFLLSTAAALLAETILSSAQSFGSDASILIMEPPIFCVKAILESAKTYGVQVHLATTLSDVKTIPAPWIRLHAKETDARLKHSLPTNMMAFFDLSTDRTAAGITNRLAKLLPPSCFMYSGDYLIRSTASTYKVSHVEDIPILEHSVAMAKNTVSASTVDDTEKVITATQILLPGQLSVNHNDQRFNLATVIDWKENEVSARICPIDSGNLFSNKKTYLLVGLTGDLGRSLCRWMILHGARHVVLTSRNPRLDPKWIANMEALGGDITVLSMDVANEDSVDAGLGKLVDMKLPPVAGIAFGPLVLQDVMLKNMDHQMMDMVLKPKVQGARILHERFSEQTGSKALDFFIMFSSIVAVIGNPGQSNYGAANAYLQALAQQRCARGLAGSTIDIGAVYGVGFVTRAEMEEDFDAIRFMFDSVEEHELHTLFAEAVVSDQRARQQPQRKTVIDMADLELTTGIPDLDPALQDRIIYFNDPRFGNFKIPGQRGDGGDNGSGSKGSIADQLKQATTLDQVRQIVIDGLSEKLRVTLQVSDGESVDPTIPLIDQGVDSLGAVTVGSWFSKQLYLDLPLLRVLGGASVADLADDAATRLPATSIPLLLQIGDSTGTSDSGASPTPTDSHDEASSATSTDASSAEEDEEQEDDNEQGGRKILRRERLSLGQEYSWRQQQMVKDHTIFNNTIGMFMKGTIDLDRLRRALKASLRRHEIFRTCFVTGDDYSSDLNGPVQVVLKNPENRVHFVQVNNAAEAEEEYRKLEKTNYSISTGDTLRLVDFYWGTDDHLLVIGYHRLVGDGSTTENLFNEIGQIYSGVKMQRPSTQFSDLAVQQRENLENGRMGDDIAFWKSMHSKVSSSAPTVLPIMNLINDPAANSEQQQIQPFTWQQYEAIARLDPMVAFRIKERSRKHKATPMQFYLAAYHVLLARLTGSKDITIGLAETNRSTMEEISAMGFFANVLPLRFDEFVGSKTFGEHLVATKDSVREAMQHARVPYGVILDCLGLNLPTSGEEPKTQTHAPLFQAVFDYKQGQAESGSIGNAKMTSVLASRERTPYDIVLEMWDDPTKDPLIHVKLQSSLYGPEHAQAFVDHFSSILTMFSMNPALKLA</sequence>
<evidence type="ECO:0000250" key="1">
    <source>
        <dbReference type="UniProtKB" id="Q9Y8A5"/>
    </source>
</evidence>
<evidence type="ECO:0000255" key="2">
    <source>
        <dbReference type="PROSITE-ProRule" id="PRU00258"/>
    </source>
</evidence>
<evidence type="ECO:0000255" key="3">
    <source>
        <dbReference type="PROSITE-ProRule" id="PRU01348"/>
    </source>
</evidence>
<evidence type="ECO:0000255" key="4">
    <source>
        <dbReference type="PROSITE-ProRule" id="PRU01363"/>
    </source>
</evidence>
<evidence type="ECO:0000255" key="5">
    <source>
        <dbReference type="PROSITE-ProRule" id="PRU10022"/>
    </source>
</evidence>
<evidence type="ECO:0000256" key="6">
    <source>
        <dbReference type="SAM" id="MobiDB-lite"/>
    </source>
</evidence>
<evidence type="ECO:0000269" key="7">
    <source>
    </source>
</evidence>
<evidence type="ECO:0000269" key="8">
    <source>
    </source>
</evidence>
<evidence type="ECO:0000269" key="9">
    <source>
    </source>
</evidence>
<evidence type="ECO:0000269" key="10">
    <source>
    </source>
</evidence>
<evidence type="ECO:0000269" key="11">
    <source>
    </source>
</evidence>
<evidence type="ECO:0000303" key="12">
    <source>
    </source>
</evidence>
<evidence type="ECO:0000305" key="13"/>
<comment type="function">
    <text evidence="8 9">Nonaketide synthase; part of the gene cluster that mediates the biosynthesis of compactin, also known as mevastatin or ML-236B, and which acts as a potent competitive inhibitor of HMG-CoA reductase (PubMed:12172803, PubMed:12242508). Compactin biosynthesis is performed in two stages (PubMed:12172803). The first stage is catalyzed by the nonaketide synthase mlcA, which belongs to type I polyketide synthases and catalyzes the iterative nine-step formation of the polyketide (PubMed:12172803). This PKS stage is completed by the action of dehydrogenase mlcG, which catalyzes the NADPH-dependent reduction of the unsaturated tetra-, penta- and heptaketide intermediates that arise during the mlcA-mediated biosynthesis of the nonaketide chain and leads to dihydro-ML-236C carboxylate (PubMed:12172803). Covalently bound dihydro-ML-236C carboxylate is released from mlcA by the mlcF esterase (PubMed:12172803). Conversion of dihydro-ML-236C carboxylate into ML-236A carboxylate is subsequently performed with the participation of molecular oxygen and P450 monoogygenase mlcC (PubMed:12172803). Finally, mlcH performs the conversion of ML-236A carboxylate to ML-236B/compactin carboxylate through the addition of the side-chain diketide moiety produced by the diketide synthase mlcB (PubMed:12172803).</text>
</comment>
<comment type="catalytic activity">
    <reaction evidence="13">
        <text>holo-[compactin nonaketide synthase] + 9 malonyl-CoA + 11 NADPH + 20 H(+) = dihydro-ML-236C-[compactin nonaketide synthase] + 9 CO2 + 11 NADP(+) + 9 CoA + 6 H2O</text>
        <dbReference type="Rhea" id="RHEA:57612"/>
        <dbReference type="Rhea" id="RHEA-COMP:14940"/>
        <dbReference type="Rhea" id="RHEA-COMP:14941"/>
        <dbReference type="ChEBI" id="CHEBI:15377"/>
        <dbReference type="ChEBI" id="CHEBI:15378"/>
        <dbReference type="ChEBI" id="CHEBI:16526"/>
        <dbReference type="ChEBI" id="CHEBI:57287"/>
        <dbReference type="ChEBI" id="CHEBI:57384"/>
        <dbReference type="ChEBI" id="CHEBI:57783"/>
        <dbReference type="ChEBI" id="CHEBI:58349"/>
        <dbReference type="ChEBI" id="CHEBI:64479"/>
        <dbReference type="ChEBI" id="CHEBI:142039"/>
    </reaction>
</comment>
<comment type="cofactor">
    <cofactor evidence="1">
        <name>pantetheine 4'-phosphate</name>
        <dbReference type="ChEBI" id="CHEBI:47942"/>
    </cofactor>
    <text evidence="1">Binds 1 phosphopantetheine covalently.</text>
</comment>
<comment type="pathway">
    <text evidence="13">Polyketide biosynthesis.</text>
</comment>
<comment type="induction">
    <text evidence="8 10 11">Expression is induced at the beginning of the stationary phase, which is consistent with the timing of compactin production (PubMed:12172803). Expression is controlled by the ML-236B/compactin cluster transcription regulator mlcR (PubMed:12436257, PubMed:18667169).</text>
</comment>
<comment type="disruption phenotype">
    <text evidence="8">Impairs the production of compactin (PubMed:12172803).</text>
</comment>
<comment type="biotechnology">
    <text evidence="7">Compactin (also known as mevastatin or ML-236B) and the intermediary metabolites Ml-236C and ML-236A are inhibitors of HMG-CoA reductase involved in cholesterogenesis (PubMed:1010803). Their hypocholesterolemic activity might be useful for lowering cholesterol levels in the blood and reduce artherosclerosis and coronary heart disease (PubMed:1010803).</text>
</comment>
<protein>
    <recommendedName>
        <fullName evidence="12">Compactin nonaketide synthase, polyketide synthase component</fullName>
        <ecNumber evidence="13">2.3.1.-</ecNumber>
    </recommendedName>
    <alternativeName>
        <fullName evidence="12">Compactin biosynthesis protein A</fullName>
    </alternativeName>
    <alternativeName>
        <fullName evidence="13">Compactin nonaketide synthase mlcA</fullName>
    </alternativeName>
</protein>
<proteinExistence type="evidence at protein level"/>